<comment type="function">
    <text evidence="4 5">Receptor for TNFSF13/APRIL and TNFSF13B/TALL1/BAFF/BLYS that binds both ligands with similar high affinity. Mediates calcineurin-dependent activation of NF-AT, as well as activation of NF-kappa-B and AP-1. Involved in the stimulation of B- and T-cell function and the regulation of humoral immunity.</text>
</comment>
<comment type="subunit">
    <text evidence="7">Binds TRAF2, TRAF5 and TRAF6. Binds the NH2-terminal domain of CAMLG with its C-terminus.</text>
</comment>
<comment type="interaction">
    <interactant intactId="EBI-519160">
        <id>O14836</id>
    </interactant>
    <interactant intactId="EBI-447677">
        <id>Q99836</id>
        <label>MYD88</label>
    </interactant>
    <organismsDiffer>false</organismsDiffer>
    <experiments>12</experiments>
</comment>
<comment type="interaction">
    <interactant intactId="EBI-519160">
        <id>O14836</id>
    </interactant>
    <interactant intactId="EBI-347996">
        <id>O43765</id>
        <label>SGTA</label>
    </interactant>
    <organismsDiffer>false</organismsDiffer>
    <experiments>3</experiments>
</comment>
<comment type="interaction">
    <interactant intactId="EBI-519160">
        <id>O14836</id>
    </interactant>
    <interactant intactId="EBI-519169">
        <id>Q9Y275</id>
        <label>TNFSF13B</label>
    </interactant>
    <organismsDiffer>false</organismsDiffer>
    <experiments>7</experiments>
</comment>
<comment type="interaction">
    <interactant intactId="EBI-12023110">
        <id>O14836-2</id>
    </interactant>
    <interactant intactId="EBI-347996">
        <id>O43765</id>
        <label>SGTA</label>
    </interactant>
    <organismsDiffer>false</organismsDiffer>
    <experiments>8</experiments>
</comment>
<comment type="subcellular location">
    <subcellularLocation>
        <location>Membrane</location>
        <topology>Single-pass type III membrane protein</topology>
    </subcellularLocation>
</comment>
<comment type="alternative products">
    <event type="alternative splicing"/>
    <isoform>
        <id>O14836-1</id>
        <name>1</name>
        <sequence type="displayed"/>
    </isoform>
    <isoform>
        <id>O14836-2</id>
        <name>2</name>
        <sequence type="described" ref="VSP_013798"/>
    </isoform>
    <isoform>
        <id>O14836-3</id>
        <name>3</name>
        <sequence type="described" ref="VSP_054184 VSP_054185"/>
    </isoform>
</comment>
<comment type="tissue specificity">
    <text>Highly expressed in spleen, thymus, small intestine and peripheral blood leukocytes. Expressed in resting B-cells and activated T-cells, but not in resting T-cells.</text>
</comment>
<comment type="disease" evidence="8">
    <disease id="DI-01371">
        <name>Immunodeficiency, common variable, 2</name>
        <acronym>CVID2</acronym>
        <description>A primary immunodeficiency characterized by antibody deficiency, hypogammaglobulinemia, recurrent bacterial infections and an inability to mount an antibody response to antigen. The defect results from a failure of B-cell differentiation and impaired secretion of immunoglobulins; the numbers of circulating B-cells is usually in the normal range, but can be low.</description>
        <dbReference type="MIM" id="240500"/>
    </disease>
    <text>The disease is caused by variants affecting the gene represented in this entry.</text>
</comment>
<comment type="disease" evidence="8">
    <disease id="DI-01814">
        <name>Immunoglobulin A deficiency 2</name>
        <acronym>IGAD2</acronym>
        <description>Selective deficiency of immunoglobulin A (IGAD) is the most common form of primary immunodeficiency, with an incidence of approximately 1 in 600 individuals in the western world. Individuals with symptomatic IGAD often have deficiency of IgG subclasses or decreased antibody response to carbohydrate antigens such as pneumococcal polysaccharide vaccine. Individuals with IGAD also suffer from recurrent sinopulmonary and gastrointestinal infections and have an increased incidence of autoimmune disorders and of lymphoid and non-lymphoid malignancies. In vitro studies have suggested that some individuals with IGAD have impaired isotype class switching to IgA and others may have a post-switch defect. IGAD and CVID have been known to coexist in families. Some individuals initially present with IGAD1 and then develop CVID. These observations suggest that some cases of IGAD and CVID may have a common etiology.</description>
        <dbReference type="MIM" id="609529"/>
    </disease>
    <text>The disease is caused by variants affecting the gene represented in this entry.</text>
</comment>
<comment type="online information" name="TNFRSF13Bbase">
    <link uri="https://databases.lovd.nl/shared/genes/TNFRSF13B"/>
    <text>TNFRSF13B mutation db</text>
</comment>
<organism>
    <name type="scientific">Homo sapiens</name>
    <name type="common">Human</name>
    <dbReference type="NCBI Taxonomy" id="9606"/>
    <lineage>
        <taxon>Eukaryota</taxon>
        <taxon>Metazoa</taxon>
        <taxon>Chordata</taxon>
        <taxon>Craniata</taxon>
        <taxon>Vertebrata</taxon>
        <taxon>Euteleostomi</taxon>
        <taxon>Mammalia</taxon>
        <taxon>Eutheria</taxon>
        <taxon>Euarchontoglires</taxon>
        <taxon>Primates</taxon>
        <taxon>Haplorrhini</taxon>
        <taxon>Catarrhini</taxon>
        <taxon>Hominidae</taxon>
        <taxon>Homo</taxon>
    </lineage>
</organism>
<protein>
    <recommendedName>
        <fullName>Tumor necrosis factor receptor superfamily member 13B</fullName>
    </recommendedName>
    <alternativeName>
        <fullName>Transmembrane activator and CAML interactor</fullName>
    </alternativeName>
    <cdAntigenName>CD267</cdAntigenName>
</protein>
<evidence type="ECO:0000250" key="1"/>
<evidence type="ECO:0000255" key="2"/>
<evidence type="ECO:0000256" key="3">
    <source>
        <dbReference type="SAM" id="MobiDB-lite"/>
    </source>
</evidence>
<evidence type="ECO:0000269" key="4">
    <source>
    </source>
</evidence>
<evidence type="ECO:0000269" key="5">
    <source>
    </source>
</evidence>
<evidence type="ECO:0000269" key="6">
    <source>
    </source>
</evidence>
<evidence type="ECO:0000269" key="7">
    <source>
    </source>
</evidence>
<evidence type="ECO:0000269" key="8">
    <source>
    </source>
</evidence>
<evidence type="ECO:0000269" key="9">
    <source>
    </source>
</evidence>
<evidence type="ECO:0000303" key="10">
    <source>
    </source>
</evidence>
<evidence type="ECO:0000303" key="11">
    <source>
    </source>
</evidence>
<evidence type="ECO:0000303" key="12">
    <source ref="2"/>
</evidence>
<evidence type="ECO:0007829" key="13">
    <source>
        <dbReference type="PDB" id="1XU1"/>
    </source>
</evidence>
<gene>
    <name type="primary">TNFRSF13B</name>
    <name type="synonym">TACI</name>
</gene>
<reference key="1">
    <citation type="journal article" date="1997" name="Science">
        <title>NF-AT activation induced by a CAML-interacting member of the tumor necrosis factor receptor superfamily.</title>
        <authorList>
            <person name="von Buelow G.-U."/>
            <person name="Bram R.J."/>
        </authorList>
    </citation>
    <scope>NUCLEOTIDE SEQUENCE [MRNA] (ISOFORM 1)</scope>
    <source>
        <tissue>B-cell</tissue>
    </source>
</reference>
<reference key="2">
    <citation type="submission" date="2003-05" db="EMBL/GenBank/DDBJ databases">
        <authorList>
            <person name="Zhou G."/>
            <person name="Ke R."/>
            <person name="Li H."/>
            <person name="Zheng G."/>
            <person name="Shen C."/>
            <person name="Lin L."/>
            <person name="Yang S."/>
        </authorList>
    </citation>
    <scope>NUCLEOTIDE SEQUENCE [LARGE SCALE MRNA] (ISOFORM 2)</scope>
</reference>
<reference key="3">
    <citation type="journal article" date="2004" name="Nat. Genet.">
        <title>Complete sequencing and characterization of 21,243 full-length human cDNAs.</title>
        <authorList>
            <person name="Ota T."/>
            <person name="Suzuki Y."/>
            <person name="Nishikawa T."/>
            <person name="Otsuki T."/>
            <person name="Sugiyama T."/>
            <person name="Irie R."/>
            <person name="Wakamatsu A."/>
            <person name="Hayashi K."/>
            <person name="Sato H."/>
            <person name="Nagai K."/>
            <person name="Kimura K."/>
            <person name="Makita H."/>
            <person name="Sekine M."/>
            <person name="Obayashi M."/>
            <person name="Nishi T."/>
            <person name="Shibahara T."/>
            <person name="Tanaka T."/>
            <person name="Ishii S."/>
            <person name="Yamamoto J."/>
            <person name="Saito K."/>
            <person name="Kawai Y."/>
            <person name="Isono Y."/>
            <person name="Nakamura Y."/>
            <person name="Nagahari K."/>
            <person name="Murakami K."/>
            <person name="Yasuda T."/>
            <person name="Iwayanagi T."/>
            <person name="Wagatsuma M."/>
            <person name="Shiratori A."/>
            <person name="Sudo H."/>
            <person name="Hosoiri T."/>
            <person name="Kaku Y."/>
            <person name="Kodaira H."/>
            <person name="Kondo H."/>
            <person name="Sugawara M."/>
            <person name="Takahashi M."/>
            <person name="Kanda K."/>
            <person name="Yokoi T."/>
            <person name="Furuya T."/>
            <person name="Kikkawa E."/>
            <person name="Omura Y."/>
            <person name="Abe K."/>
            <person name="Kamihara K."/>
            <person name="Katsuta N."/>
            <person name="Sato K."/>
            <person name="Tanikawa M."/>
            <person name="Yamazaki M."/>
            <person name="Ninomiya K."/>
            <person name="Ishibashi T."/>
            <person name="Yamashita H."/>
            <person name="Murakawa K."/>
            <person name="Fujimori K."/>
            <person name="Tanai H."/>
            <person name="Kimata M."/>
            <person name="Watanabe M."/>
            <person name="Hiraoka S."/>
            <person name="Chiba Y."/>
            <person name="Ishida S."/>
            <person name="Ono Y."/>
            <person name="Takiguchi S."/>
            <person name="Watanabe S."/>
            <person name="Yosida M."/>
            <person name="Hotuta T."/>
            <person name="Kusano J."/>
            <person name="Kanehori K."/>
            <person name="Takahashi-Fujii A."/>
            <person name="Hara H."/>
            <person name="Tanase T.-O."/>
            <person name="Nomura Y."/>
            <person name="Togiya S."/>
            <person name="Komai F."/>
            <person name="Hara R."/>
            <person name="Takeuchi K."/>
            <person name="Arita M."/>
            <person name="Imose N."/>
            <person name="Musashino K."/>
            <person name="Yuuki H."/>
            <person name="Oshima A."/>
            <person name="Sasaki N."/>
            <person name="Aotsuka S."/>
            <person name="Yoshikawa Y."/>
            <person name="Matsunawa H."/>
            <person name="Ichihara T."/>
            <person name="Shiohata N."/>
            <person name="Sano S."/>
            <person name="Moriya S."/>
            <person name="Momiyama H."/>
            <person name="Satoh N."/>
            <person name="Takami S."/>
            <person name="Terashima Y."/>
            <person name="Suzuki O."/>
            <person name="Nakagawa S."/>
            <person name="Senoh A."/>
            <person name="Mizoguchi H."/>
            <person name="Goto Y."/>
            <person name="Shimizu F."/>
            <person name="Wakebe H."/>
            <person name="Hishigaki H."/>
            <person name="Watanabe T."/>
            <person name="Sugiyama A."/>
            <person name="Takemoto M."/>
            <person name="Kawakami B."/>
            <person name="Yamazaki M."/>
            <person name="Watanabe K."/>
            <person name="Kumagai A."/>
            <person name="Itakura S."/>
            <person name="Fukuzumi Y."/>
            <person name="Fujimori Y."/>
            <person name="Komiyama M."/>
            <person name="Tashiro H."/>
            <person name="Tanigami A."/>
            <person name="Fujiwara T."/>
            <person name="Ono T."/>
            <person name="Yamada K."/>
            <person name="Fujii Y."/>
            <person name="Ozaki K."/>
            <person name="Hirao M."/>
            <person name="Ohmori Y."/>
            <person name="Kawabata A."/>
            <person name="Hikiji T."/>
            <person name="Kobatake N."/>
            <person name="Inagaki H."/>
            <person name="Ikema Y."/>
            <person name="Okamoto S."/>
            <person name="Okitani R."/>
            <person name="Kawakami T."/>
            <person name="Noguchi S."/>
            <person name="Itoh T."/>
            <person name="Shigeta K."/>
            <person name="Senba T."/>
            <person name="Matsumura K."/>
            <person name="Nakajima Y."/>
            <person name="Mizuno T."/>
            <person name="Morinaga M."/>
            <person name="Sasaki M."/>
            <person name="Togashi T."/>
            <person name="Oyama M."/>
            <person name="Hata H."/>
            <person name="Watanabe M."/>
            <person name="Komatsu T."/>
            <person name="Mizushima-Sugano J."/>
            <person name="Satoh T."/>
            <person name="Shirai Y."/>
            <person name="Takahashi Y."/>
            <person name="Nakagawa K."/>
            <person name="Okumura K."/>
            <person name="Nagase T."/>
            <person name="Nomura N."/>
            <person name="Kikuchi H."/>
            <person name="Masuho Y."/>
            <person name="Yamashita R."/>
            <person name="Nakai K."/>
            <person name="Yada T."/>
            <person name="Nakamura Y."/>
            <person name="Ohara O."/>
            <person name="Isogai T."/>
            <person name="Sugano S."/>
        </authorList>
    </citation>
    <scope>NUCLEOTIDE SEQUENCE [LARGE SCALE MRNA] (ISOFORMS 1 AND 3)</scope>
    <scope>VARIANT LEU-251</scope>
    <source>
        <tissue>Spleen</tissue>
    </source>
</reference>
<reference key="4">
    <citation type="submission" date="2005-09" db="EMBL/GenBank/DDBJ databases">
        <authorList>
            <person name="Mural R.J."/>
            <person name="Istrail S."/>
            <person name="Sutton G.G."/>
            <person name="Florea L."/>
            <person name="Halpern A.L."/>
            <person name="Mobarry C.M."/>
            <person name="Lippert R."/>
            <person name="Walenz B."/>
            <person name="Shatkay H."/>
            <person name="Dew I."/>
            <person name="Miller J.R."/>
            <person name="Flanigan M.J."/>
            <person name="Edwards N.J."/>
            <person name="Bolanos R."/>
            <person name="Fasulo D."/>
            <person name="Halldorsson B.V."/>
            <person name="Hannenhalli S."/>
            <person name="Turner R."/>
            <person name="Yooseph S."/>
            <person name="Lu F."/>
            <person name="Nusskern D.R."/>
            <person name="Shue B.C."/>
            <person name="Zheng X.H."/>
            <person name="Zhong F."/>
            <person name="Delcher A.L."/>
            <person name="Huson D.H."/>
            <person name="Kravitz S.A."/>
            <person name="Mouchard L."/>
            <person name="Reinert K."/>
            <person name="Remington K.A."/>
            <person name="Clark A.G."/>
            <person name="Waterman M.S."/>
            <person name="Eichler E.E."/>
            <person name="Adams M.D."/>
            <person name="Hunkapiller M.W."/>
            <person name="Myers E.W."/>
            <person name="Venter J.C."/>
        </authorList>
    </citation>
    <scope>NUCLEOTIDE SEQUENCE [LARGE SCALE GENOMIC DNA]</scope>
</reference>
<reference key="5">
    <citation type="journal article" date="2004" name="Genome Res.">
        <title>The status, quality, and expansion of the NIH full-length cDNA project: the Mammalian Gene Collection (MGC).</title>
        <authorList>
            <consortium name="The MGC Project Team"/>
        </authorList>
    </citation>
    <scope>NUCLEOTIDE SEQUENCE [LARGE SCALE MRNA] (ISOFORM 2)</scope>
</reference>
<reference key="6">
    <citation type="journal article" date="2000" name="J. Biol. Chem.">
        <title>Tumor necrosis factor (TNF) receptor superfamily member TACI is a high affinity receptor for TNF family members APRIL and BLyS.</title>
        <authorList>
            <person name="Wu Y."/>
            <person name="Bressette D."/>
            <person name="Carrell J.A."/>
            <person name="Kaufman T."/>
            <person name="Feng P."/>
            <person name="Taylor K."/>
            <person name="Gan Y."/>
            <person name="Cho Y.H."/>
            <person name="Garcia A.D."/>
            <person name="Gollatz E."/>
            <person name="Dimke D."/>
            <person name="LaFleur D."/>
            <person name="Migone T.S."/>
            <person name="Nardelli B."/>
            <person name="Wei P."/>
            <person name="Ruben S.M."/>
            <person name="Ullrich S.J."/>
            <person name="Olsen H.S."/>
            <person name="Kanakaraj P."/>
            <person name="Moore P.A."/>
            <person name="Baker K.P."/>
        </authorList>
    </citation>
    <scope>FUNCTION</scope>
</reference>
<reference key="7">
    <citation type="journal article" date="2000" name="Nat. Immunol.">
        <title>APRIL and TALL-I and receptors BCMA and TACI: system for regulating humoral immunity.</title>
        <authorList>
            <person name="Yu G."/>
            <person name="Boone T."/>
            <person name="Delaney J."/>
            <person name="Hawkins N."/>
            <person name="Kelley M.J."/>
            <person name="Ramakrishnan M."/>
            <person name="McCabe S."/>
            <person name="Qiu W.R."/>
            <person name="Kornuc M."/>
            <person name="Xia X.-Z."/>
            <person name="Guo J."/>
            <person name="Stolina M."/>
            <person name="Boyle W.J."/>
            <person name="Sarosi I."/>
            <person name="Hsu H."/>
            <person name="Senaldi G."/>
            <person name="Theill L.E."/>
        </authorList>
    </citation>
    <scope>FUNCTION</scope>
</reference>
<reference key="8">
    <citation type="journal article" date="2000" name="J. Exp. Med.">
        <title>TACI is a TRAF-interacting receptor for TALL-1, a tumor necrosis factor family member involved in B cell regulation.</title>
        <authorList>
            <person name="Xia X.-Z."/>
            <person name="Treanor J."/>
            <person name="Senaldi G."/>
            <person name="Khare S.D."/>
            <person name="Boone T."/>
            <person name="Kelley M."/>
            <person name="Theill L.E."/>
            <person name="Colombero A."/>
            <person name="Solovyev I."/>
            <person name="Lee F."/>
            <person name="McCabe S."/>
            <person name="Elliott R."/>
            <person name="Miner K."/>
            <person name="Hawkins N."/>
            <person name="Guo J."/>
            <person name="Stolina M."/>
            <person name="Yu G."/>
            <person name="Wang J."/>
            <person name="Delaney J."/>
            <person name="Meng S.-Y."/>
            <person name="Boyle W.J."/>
            <person name="Hsu H."/>
        </authorList>
    </citation>
    <scope>INTERACTION WITH TRAF2 AND TRAF5</scope>
</reference>
<reference key="9">
    <citation type="journal article" date="2005" name="J. Biol. Chem.">
        <title>Structures of APRIL-receptor complexes: like BCMA, TACI employs only a single cysteine-rich domain for high affinity ligand binding.</title>
        <authorList>
            <person name="Hymowitz S.G."/>
            <person name="Patel D.R."/>
            <person name="Wallweber H.J."/>
            <person name="Runyon S."/>
            <person name="Yan M."/>
            <person name="Yin J."/>
            <person name="Shriver S.K."/>
            <person name="Gordon N.C."/>
            <person name="Pan B."/>
            <person name="Skelton N.J."/>
            <person name="Kelley R.F."/>
            <person name="Starovasnik M.A."/>
        </authorList>
    </citation>
    <scope>X-RAY CRYSTALLOGRAPHY (1.9 ANGSTROMS) OF 68-109 IN COMPLEX WITH MOUSE TNFSF13</scope>
    <scope>STRUCTURE BY NMR OF 68-109</scope>
</reference>
<reference key="10">
    <citation type="journal article" date="2005" name="Nat. Genet.">
        <title>TACI is mutant in common variable immunodeficiency and IgA deficiency.</title>
        <authorList>
            <person name="Castigli E."/>
            <person name="Wilson S.A."/>
            <person name="Garibyan L."/>
            <person name="Rachid R."/>
            <person name="Bonilla F."/>
            <person name="Schneider L."/>
            <person name="Geha R.S."/>
        </authorList>
    </citation>
    <scope>VARIANT IGAD2 ARG-104</scope>
    <scope>VARIANTS CVID2 ARG-104; GLY-181 AND HIS-202</scope>
</reference>
<reference key="11">
    <citation type="journal article" date="2011" name="Nature">
        <title>Exome sequencing identifies frequent mutation of the SWI/SNF complex gene PBRM1 in renal carcinoma.</title>
        <authorList>
            <person name="Varela I."/>
            <person name="Tarpey P."/>
            <person name="Raine K."/>
            <person name="Huang D."/>
            <person name="Ong C.K."/>
            <person name="Stephens P."/>
            <person name="Davies H."/>
            <person name="Jones D."/>
            <person name="Lin M.L."/>
            <person name="Teague J."/>
            <person name="Bignell G."/>
            <person name="Butler A."/>
            <person name="Cho J."/>
            <person name="Dalgliesh G.L."/>
            <person name="Galappaththige D."/>
            <person name="Greenman C."/>
            <person name="Hardy C."/>
            <person name="Jia M."/>
            <person name="Latimer C."/>
            <person name="Lau K.W."/>
            <person name="Marshall J."/>
            <person name="McLaren S."/>
            <person name="Menzies A."/>
            <person name="Mudie L."/>
            <person name="Stebbings L."/>
            <person name="Largaespada D.A."/>
            <person name="Wessels L.F.A."/>
            <person name="Richard S."/>
            <person name="Kahnoski R.J."/>
            <person name="Anema J."/>
            <person name="Tuveson D.A."/>
            <person name="Perez-Mancera P.A."/>
            <person name="Mustonen V."/>
            <person name="Fischer A."/>
            <person name="Adams D.J."/>
            <person name="Rust A."/>
            <person name="Chan-On W."/>
            <person name="Subimerb C."/>
            <person name="Dykema K."/>
            <person name="Furge K."/>
            <person name="Campbell P.J."/>
            <person name="Teh B.T."/>
            <person name="Stratton M.R."/>
            <person name="Futreal P.A."/>
        </authorList>
    </citation>
    <scope>VARIANT ASN-56</scope>
</reference>
<accession>O14836</accession>
<accession>B2R8B0</accession>
<accession>B7Z6V8</accession>
<accession>Q32LX4</accession>
<accession>Q7Z6F5</accession>
<sequence length="293" mass="31816">MSGLGRSRRGGRSRVDQEERFPQGLWTGVAMRSCPEEQYWDPLLGTCMSCKTICNHQSQRTCAAFCRSLSCRKEQGKFYDHLLRDCISCASICGQHPKQCAYFCENKLRSPVNLPPELRRQRSGEVENNSDNSGRYQGLEHRGSEASPALPGLKLSADQVALVYSTLGLCLCAVLCCFLVAVACFLKKRGDPCSCQPRSRPRQSPAKSSQDHAMEAGSPVSTSPEPVETCSFCFPECRAPTQESAVTPGTPDPTCAGRWGCHTRTTVLQPCPHIPDSGLGIVCVPAQEGGPGA</sequence>
<feature type="chain" id="PRO_0000058931" description="Tumor necrosis factor receptor superfamily member 13B">
    <location>
        <begin position="1"/>
        <end position="293"/>
    </location>
</feature>
<feature type="topological domain" description="Extracellular" evidence="2">
    <location>
        <begin position="1"/>
        <end position="165"/>
    </location>
</feature>
<feature type="transmembrane region" description="Helical; Signal-anchor for type III membrane protein" evidence="2">
    <location>
        <begin position="166"/>
        <end position="186"/>
    </location>
</feature>
<feature type="topological domain" description="Cytoplasmic" evidence="2">
    <location>
        <begin position="187"/>
        <end position="293"/>
    </location>
</feature>
<feature type="repeat" description="TNFR-Cys 1">
    <location>
        <begin position="33"/>
        <end position="67"/>
    </location>
</feature>
<feature type="repeat" description="TNFR-Cys 2">
    <location>
        <begin position="70"/>
        <end position="104"/>
    </location>
</feature>
<feature type="region of interest" description="Disordered" evidence="3">
    <location>
        <begin position="115"/>
        <end position="146"/>
    </location>
</feature>
<feature type="region of interest" description="Disordered" evidence="3">
    <location>
        <begin position="192"/>
        <end position="226"/>
    </location>
</feature>
<feature type="compositionally biased region" description="Polar residues" evidence="3">
    <location>
        <begin position="126"/>
        <end position="135"/>
    </location>
</feature>
<feature type="glycosylation site" description="N-linked (GlcNAc...) asparagine" evidence="2">
    <location>
        <position position="128"/>
    </location>
</feature>
<feature type="disulfide bond" evidence="1">
    <location>
        <begin position="34"/>
        <end position="47"/>
    </location>
</feature>
<feature type="disulfide bond" evidence="1">
    <location>
        <begin position="50"/>
        <end position="62"/>
    </location>
</feature>
<feature type="disulfide bond" evidence="1">
    <location>
        <begin position="54"/>
        <end position="66"/>
    </location>
</feature>
<feature type="disulfide bond">
    <location>
        <begin position="71"/>
        <end position="86"/>
    </location>
</feature>
<feature type="disulfide bond">
    <location>
        <begin position="89"/>
        <end position="100"/>
    </location>
</feature>
<feature type="disulfide bond">
    <location>
        <begin position="93"/>
        <end position="104"/>
    </location>
</feature>
<feature type="splice variant" id="VSP_013798" description="In isoform 2." evidence="11 12">
    <original>FPQGLWTGVAMRSCPEEQYWDPLLGTCMSCKTICNHQSQRTCAAFCR</original>
    <variation>W</variation>
    <location>
        <begin position="21"/>
        <end position="67"/>
    </location>
</feature>
<feature type="splice variant" id="VSP_054184" description="In isoform 3." evidence="10">
    <original>LPGLKLSADQVALVYSTLGLCLCAVLC</original>
    <variation>PRGCPAPGTRKSFWDKENFQGEGFHLG</variation>
    <location>
        <begin position="150"/>
        <end position="176"/>
    </location>
</feature>
<feature type="splice variant" id="VSP_054185" description="In isoform 3." evidence="10">
    <location>
        <begin position="177"/>
        <end position="293"/>
    </location>
</feature>
<feature type="sequence variant" id="VAR_064758" description="Found in a renal cell carcinoma sample; somatic mutation." evidence="9">
    <original>H</original>
    <variation>N</variation>
    <location>
        <position position="56"/>
    </location>
</feature>
<feature type="sequence variant" id="VAR_024027" description="In CVID2 and IGAD2; dbSNP:rs34557412." evidence="8">
    <original>C</original>
    <variation>R</variation>
    <location>
        <position position="104"/>
    </location>
</feature>
<feature type="sequence variant" id="VAR_024028" description="In CVID2." evidence="8">
    <original>A</original>
    <variation>G</variation>
    <location>
        <position position="181"/>
    </location>
</feature>
<feature type="sequence variant" id="VAR_024029" description="In CVID2; dbSNP:rs104894649." evidence="8">
    <original>R</original>
    <variation>H</variation>
    <location>
        <position position="202"/>
    </location>
</feature>
<feature type="sequence variant" id="VAR_052353" description="In dbSNP:rs34562254." evidence="6">
    <original>P</original>
    <variation>L</variation>
    <location>
        <position position="251"/>
    </location>
</feature>
<feature type="helix" evidence="13">
    <location>
        <begin position="73"/>
        <end position="75"/>
    </location>
</feature>
<feature type="strand" evidence="13">
    <location>
        <begin position="77"/>
        <end position="80"/>
    </location>
</feature>
<feature type="turn" evidence="13">
    <location>
        <begin position="81"/>
        <end position="84"/>
    </location>
</feature>
<feature type="strand" evidence="13">
    <location>
        <begin position="85"/>
        <end position="88"/>
    </location>
</feature>
<feature type="helix" evidence="13">
    <location>
        <begin position="89"/>
        <end position="92"/>
    </location>
</feature>
<feature type="helix" evidence="13">
    <location>
        <begin position="98"/>
        <end position="100"/>
    </location>
</feature>
<feature type="helix" evidence="13">
    <location>
        <begin position="101"/>
        <end position="104"/>
    </location>
</feature>
<name>TR13B_HUMAN</name>
<dbReference type="EMBL" id="AF023614">
    <property type="protein sequence ID" value="AAC51790.1"/>
    <property type="molecule type" value="mRNA"/>
</dbReference>
<dbReference type="EMBL" id="AY302137">
    <property type="protein sequence ID" value="AAP57629.1"/>
    <property type="molecule type" value="mRNA"/>
</dbReference>
<dbReference type="EMBL" id="AK301032">
    <property type="protein sequence ID" value="BAH13394.1"/>
    <property type="molecule type" value="mRNA"/>
</dbReference>
<dbReference type="EMBL" id="AK313302">
    <property type="protein sequence ID" value="BAG36107.1"/>
    <property type="molecule type" value="mRNA"/>
</dbReference>
<dbReference type="EMBL" id="CH471196">
    <property type="protein sequence ID" value="EAW55729.1"/>
    <property type="molecule type" value="Genomic_DNA"/>
</dbReference>
<dbReference type="EMBL" id="BC109392">
    <property type="protein sequence ID" value="AAI09393.1"/>
    <property type="molecule type" value="mRNA"/>
</dbReference>
<dbReference type="CCDS" id="CCDS11181.1">
    <molecule id="O14836-1"/>
</dbReference>
<dbReference type="RefSeq" id="NP_036584.1">
    <molecule id="O14836-1"/>
    <property type="nucleotide sequence ID" value="NM_012452.3"/>
</dbReference>
<dbReference type="PDB" id="1XU1">
    <property type="method" value="X-ray"/>
    <property type="resolution" value="1.90 A"/>
    <property type="chains" value="R/S/T=68-109"/>
</dbReference>
<dbReference type="PDB" id="1XUT">
    <property type="method" value="NMR"/>
    <property type="chains" value="A=68-109"/>
</dbReference>
<dbReference type="PDBsum" id="1XU1"/>
<dbReference type="PDBsum" id="1XUT"/>
<dbReference type="SMR" id="O14836"/>
<dbReference type="BioGRID" id="117046">
    <property type="interactions" value="48"/>
</dbReference>
<dbReference type="CORUM" id="O14836"/>
<dbReference type="DIP" id="DIP-6224N"/>
<dbReference type="FunCoup" id="O14836">
    <property type="interactions" value="713"/>
</dbReference>
<dbReference type="IntAct" id="O14836">
    <property type="interactions" value="45"/>
</dbReference>
<dbReference type="STRING" id="9606.ENSP00000261652"/>
<dbReference type="GlyCosmos" id="O14836">
    <property type="glycosylation" value="1 site, No reported glycans"/>
</dbReference>
<dbReference type="GlyGen" id="O14836">
    <property type="glycosylation" value="2 sites"/>
</dbReference>
<dbReference type="iPTMnet" id="O14836"/>
<dbReference type="PhosphoSitePlus" id="O14836"/>
<dbReference type="SwissPalm" id="O14836"/>
<dbReference type="BioMuta" id="TNFRSF13B"/>
<dbReference type="MassIVE" id="O14836"/>
<dbReference type="PaxDb" id="9606-ENSP00000261652"/>
<dbReference type="PeptideAtlas" id="O14836"/>
<dbReference type="ProteomicsDB" id="48270">
    <molecule id="O14836-1"/>
</dbReference>
<dbReference type="ProteomicsDB" id="48271">
    <molecule id="O14836-2"/>
</dbReference>
<dbReference type="Antibodypedia" id="35076">
    <property type="antibodies" value="660 antibodies from 44 providers"/>
</dbReference>
<dbReference type="DNASU" id="23495"/>
<dbReference type="Ensembl" id="ENST00000261652.7">
    <molecule id="O14836-1"/>
    <property type="protein sequence ID" value="ENSP00000261652.2"/>
    <property type="gene ID" value="ENSG00000240505.9"/>
</dbReference>
<dbReference type="Ensembl" id="ENST00000583789.1">
    <molecule id="O14836-2"/>
    <property type="protein sequence ID" value="ENSP00000462952.1"/>
    <property type="gene ID" value="ENSG00000240505.9"/>
</dbReference>
<dbReference type="GeneID" id="23495"/>
<dbReference type="KEGG" id="hsa:23495"/>
<dbReference type="MANE-Select" id="ENST00000261652.7">
    <property type="protein sequence ID" value="ENSP00000261652.2"/>
    <property type="RefSeq nucleotide sequence ID" value="NM_012452.3"/>
    <property type="RefSeq protein sequence ID" value="NP_036584.1"/>
</dbReference>
<dbReference type="UCSC" id="uc002gqt.2">
    <molecule id="O14836-1"/>
    <property type="organism name" value="human"/>
</dbReference>
<dbReference type="AGR" id="HGNC:18153"/>
<dbReference type="CTD" id="23495"/>
<dbReference type="DisGeNET" id="23495"/>
<dbReference type="GeneCards" id="TNFRSF13B"/>
<dbReference type="HGNC" id="HGNC:18153">
    <property type="gene designation" value="TNFRSF13B"/>
</dbReference>
<dbReference type="HPA" id="ENSG00000240505">
    <property type="expression patterns" value="Group enriched (intestine, lymphoid tissue, skeletal muscle)"/>
</dbReference>
<dbReference type="MalaCards" id="TNFRSF13B"/>
<dbReference type="MIM" id="240500">
    <property type="type" value="phenotype"/>
</dbReference>
<dbReference type="MIM" id="604907">
    <property type="type" value="gene"/>
</dbReference>
<dbReference type="MIM" id="609529">
    <property type="type" value="phenotype"/>
</dbReference>
<dbReference type="neXtProt" id="NX_O14836"/>
<dbReference type="OpenTargets" id="ENSG00000240505"/>
<dbReference type="Orphanet" id="1572">
    <property type="disease" value="Common variable immunodeficiency"/>
</dbReference>
<dbReference type="PharmGKB" id="PA38509"/>
<dbReference type="VEuPathDB" id="HostDB:ENSG00000240505"/>
<dbReference type="eggNOG" id="ENOG502SANG">
    <property type="taxonomic scope" value="Eukaryota"/>
</dbReference>
<dbReference type="GeneTree" id="ENSGT00390000013910"/>
<dbReference type="HOGENOM" id="CLU_086237_0_0_1"/>
<dbReference type="InParanoid" id="O14836"/>
<dbReference type="OMA" id="CESMDCN"/>
<dbReference type="OrthoDB" id="9934669at2759"/>
<dbReference type="PAN-GO" id="O14836">
    <property type="GO annotations" value="3 GO annotations based on evolutionary models"/>
</dbReference>
<dbReference type="PhylomeDB" id="O14836"/>
<dbReference type="TreeFam" id="TF337993"/>
<dbReference type="PathwayCommons" id="O14836"/>
<dbReference type="Reactome" id="R-HSA-5669034">
    <property type="pathway name" value="TNFs bind their physiological receptors"/>
</dbReference>
<dbReference type="SignaLink" id="O14836"/>
<dbReference type="SIGNOR" id="O14836"/>
<dbReference type="BioGRID-ORCS" id="23495">
    <property type="hits" value="13 hits in 1143 CRISPR screens"/>
</dbReference>
<dbReference type="ChiTaRS" id="TNFRSF13B">
    <property type="organism name" value="human"/>
</dbReference>
<dbReference type="EvolutionaryTrace" id="O14836"/>
<dbReference type="GeneWiki" id="TNFRSF13B"/>
<dbReference type="GenomeRNAi" id="23495"/>
<dbReference type="Pharos" id="O14836">
    <property type="development level" value="Tbio"/>
</dbReference>
<dbReference type="PRO" id="PR:O14836"/>
<dbReference type="Proteomes" id="UP000005640">
    <property type="component" value="Chromosome 17"/>
</dbReference>
<dbReference type="RNAct" id="O14836">
    <property type="molecule type" value="protein"/>
</dbReference>
<dbReference type="Bgee" id="ENSG00000240505">
    <property type="expression patterns" value="Expressed in spleen and 125 other cell types or tissues"/>
</dbReference>
<dbReference type="ExpressionAtlas" id="O14836">
    <property type="expression patterns" value="baseline and differential"/>
</dbReference>
<dbReference type="GO" id="GO:0005886">
    <property type="term" value="C:plasma membrane"/>
    <property type="evidence" value="ECO:0000304"/>
    <property type="project" value="Reactome"/>
</dbReference>
<dbReference type="GO" id="GO:0038023">
    <property type="term" value="F:signaling receptor activity"/>
    <property type="evidence" value="ECO:0000304"/>
    <property type="project" value="ProtInc"/>
</dbReference>
<dbReference type="GO" id="GO:0002250">
    <property type="term" value="P:adaptive immune response"/>
    <property type="evidence" value="ECO:0007669"/>
    <property type="project" value="UniProtKB-KW"/>
</dbReference>
<dbReference type="GO" id="GO:0001782">
    <property type="term" value="P:B cell homeostasis"/>
    <property type="evidence" value="ECO:0000318"/>
    <property type="project" value="GO_Central"/>
</dbReference>
<dbReference type="GO" id="GO:0007166">
    <property type="term" value="P:cell surface receptor signaling pathway"/>
    <property type="evidence" value="ECO:0000304"/>
    <property type="project" value="ProtInc"/>
</dbReference>
<dbReference type="GO" id="GO:0002244">
    <property type="term" value="P:hematopoietic progenitor cell differentiation"/>
    <property type="evidence" value="ECO:0000318"/>
    <property type="project" value="GO_Central"/>
</dbReference>
<dbReference type="GO" id="GO:0030889">
    <property type="term" value="P:negative regulation of B cell proliferation"/>
    <property type="evidence" value="ECO:0000318"/>
    <property type="project" value="GO_Central"/>
</dbReference>
<dbReference type="CDD" id="cd13415">
    <property type="entry name" value="TNFRSF13B"/>
    <property type="match status" value="1"/>
</dbReference>
<dbReference type="FunFam" id="4.10.1290.10:FF:000001">
    <property type="entry name" value="Tumor necrosis factor receptor superfamily member 13B"/>
    <property type="match status" value="1"/>
</dbReference>
<dbReference type="FunFam" id="4.10.1290.10:FF:000002">
    <property type="entry name" value="Tumor necrosis factor receptor superfamily member 13B"/>
    <property type="match status" value="1"/>
</dbReference>
<dbReference type="Gene3D" id="4.10.1290.10">
    <property type="entry name" value="Tumor necrosis factor receptor superfamily"/>
    <property type="match status" value="2"/>
</dbReference>
<dbReference type="InterPro" id="IPR015384">
    <property type="entry name" value="TACI_Cys-rich-dom"/>
</dbReference>
<dbReference type="InterPro" id="IPR022317">
    <property type="entry name" value="TNFR_13B"/>
</dbReference>
<dbReference type="PANTHER" id="PTHR15511">
    <property type="entry name" value="TUMOR NECROSIS FACTOR RECEPTOR SUPERFAMILY MEMBER 13B"/>
    <property type="match status" value="1"/>
</dbReference>
<dbReference type="PANTHER" id="PTHR15511:SF2">
    <property type="entry name" value="TUMOR NECROSIS FACTOR RECEPTOR SUPERFAMILY MEMBER 13B"/>
    <property type="match status" value="1"/>
</dbReference>
<dbReference type="Pfam" id="PF09305">
    <property type="entry name" value="TACI-CRD2"/>
    <property type="match status" value="2"/>
</dbReference>
<dbReference type="PRINTS" id="PR01963">
    <property type="entry name" value="TNFACTORR13B"/>
</dbReference>
<dbReference type="SUPFAM" id="SSF57586">
    <property type="entry name" value="TNF receptor-like"/>
    <property type="match status" value="2"/>
</dbReference>
<dbReference type="PROSITE" id="PS00652">
    <property type="entry name" value="TNFR_NGFR_1"/>
    <property type="match status" value="1"/>
</dbReference>
<keyword id="KW-0002">3D-structure</keyword>
<keyword id="KW-1064">Adaptive immunity</keyword>
<keyword id="KW-0025">Alternative splicing</keyword>
<keyword id="KW-0225">Disease variant</keyword>
<keyword id="KW-1015">Disulfide bond</keyword>
<keyword id="KW-0325">Glycoprotein</keyword>
<keyword id="KW-0391">Immunity</keyword>
<keyword id="KW-0472">Membrane</keyword>
<keyword id="KW-1267">Proteomics identification</keyword>
<keyword id="KW-0675">Receptor</keyword>
<keyword id="KW-1185">Reference proteome</keyword>
<keyword id="KW-0677">Repeat</keyword>
<keyword id="KW-0735">Signal-anchor</keyword>
<keyword id="KW-0812">Transmembrane</keyword>
<keyword id="KW-1133">Transmembrane helix</keyword>
<proteinExistence type="evidence at protein level"/>